<comment type="function">
    <text evidence="1">Participates in cysteine desulfuration mediated by SufS. Cysteine desulfuration mobilizes sulfur from L-cysteine to yield L-alanine and constitutes an essential step in sulfur metabolism for biosynthesis of a variety of sulfur-containing biomolecules. Functions as a sulfur acceptor for SufS, by mediating the direct transfer of the sulfur atom from the S-sulfanylcysteine of SufS, an intermediate product of cysteine desulfuration process.</text>
</comment>
<comment type="pathway">
    <text evidence="1">Cofactor biosynthesis; iron-sulfur cluster biosynthesis.</text>
</comment>
<comment type="subunit">
    <text evidence="1">Homodimer. Interacts with SufS.</text>
</comment>
<comment type="subcellular location">
    <subcellularLocation>
        <location evidence="1">Cytoplasm</location>
    </subcellularLocation>
</comment>
<comment type="similarity">
    <text evidence="1">Belongs to the SufE family.</text>
</comment>
<keyword id="KW-0963">Cytoplasm</keyword>
<keyword id="KW-1185">Reference proteome</keyword>
<name>SUFE_SHISS</name>
<reference key="1">
    <citation type="journal article" date="2005" name="Nucleic Acids Res.">
        <title>Genome dynamics and diversity of Shigella species, the etiologic agents of bacillary dysentery.</title>
        <authorList>
            <person name="Yang F."/>
            <person name="Yang J."/>
            <person name="Zhang X."/>
            <person name="Chen L."/>
            <person name="Jiang Y."/>
            <person name="Yan Y."/>
            <person name="Tang X."/>
            <person name="Wang J."/>
            <person name="Xiong Z."/>
            <person name="Dong J."/>
            <person name="Xue Y."/>
            <person name="Zhu Y."/>
            <person name="Xu X."/>
            <person name="Sun L."/>
            <person name="Chen S."/>
            <person name="Nie H."/>
            <person name="Peng J."/>
            <person name="Xu J."/>
            <person name="Wang Y."/>
            <person name="Yuan Z."/>
            <person name="Wen Y."/>
            <person name="Yao Z."/>
            <person name="Shen Y."/>
            <person name="Qiang B."/>
            <person name="Hou Y."/>
            <person name="Yu J."/>
            <person name="Jin Q."/>
        </authorList>
    </citation>
    <scope>NUCLEOTIDE SEQUENCE [LARGE SCALE GENOMIC DNA]</scope>
    <source>
        <strain>Ss046</strain>
    </source>
</reference>
<dbReference type="EMBL" id="CP000038">
    <property type="protein sequence ID" value="AAZ88180.1"/>
    <property type="molecule type" value="Genomic_DNA"/>
</dbReference>
<dbReference type="RefSeq" id="WP_001196535.1">
    <property type="nucleotide sequence ID" value="NC_007384.1"/>
</dbReference>
<dbReference type="SMR" id="Q3Z232"/>
<dbReference type="GeneID" id="93775834"/>
<dbReference type="KEGG" id="ssn:SSON_1477"/>
<dbReference type="HOGENOM" id="CLU_124502_1_1_6"/>
<dbReference type="UniPathway" id="UPA00266"/>
<dbReference type="Proteomes" id="UP000002529">
    <property type="component" value="Chromosome"/>
</dbReference>
<dbReference type="GO" id="GO:0005737">
    <property type="term" value="C:cytoplasm"/>
    <property type="evidence" value="ECO:0007669"/>
    <property type="project" value="UniProtKB-SubCell"/>
</dbReference>
<dbReference type="GO" id="GO:0016226">
    <property type="term" value="P:iron-sulfur cluster assembly"/>
    <property type="evidence" value="ECO:0007669"/>
    <property type="project" value="InterPro"/>
</dbReference>
<dbReference type="GO" id="GO:0006790">
    <property type="term" value="P:sulfur compound metabolic process"/>
    <property type="evidence" value="ECO:0007669"/>
    <property type="project" value="InterPro"/>
</dbReference>
<dbReference type="FunFam" id="3.90.1010.10:FF:000004">
    <property type="entry name" value="Cysteine desulfuration protein SufE"/>
    <property type="match status" value="1"/>
</dbReference>
<dbReference type="Gene3D" id="3.90.1010.10">
    <property type="match status" value="1"/>
</dbReference>
<dbReference type="HAMAP" id="MF_01832">
    <property type="entry name" value="SufE"/>
    <property type="match status" value="1"/>
</dbReference>
<dbReference type="InterPro" id="IPR023939">
    <property type="entry name" value="Cysteine_desulfuration_SufE"/>
</dbReference>
<dbReference type="InterPro" id="IPR003808">
    <property type="entry name" value="Fe-S_metab-assoc_dom"/>
</dbReference>
<dbReference type="NCBIfam" id="NF006792">
    <property type="entry name" value="PRK09296.1"/>
    <property type="match status" value="1"/>
</dbReference>
<dbReference type="PANTHER" id="PTHR43597:SF3">
    <property type="entry name" value="CYSTEINE DESULFURATION PROTEIN SUFE"/>
    <property type="match status" value="1"/>
</dbReference>
<dbReference type="PANTHER" id="PTHR43597">
    <property type="entry name" value="SULFUR ACCEPTOR PROTEIN CSDE"/>
    <property type="match status" value="1"/>
</dbReference>
<dbReference type="Pfam" id="PF02657">
    <property type="entry name" value="SufE"/>
    <property type="match status" value="1"/>
</dbReference>
<dbReference type="SUPFAM" id="SSF82649">
    <property type="entry name" value="SufE/NifU"/>
    <property type="match status" value="1"/>
</dbReference>
<sequence>MALLPDKEKLLRNFLRCANWEEKYLYIIELGQRLTELRDEDRSPQNSIQGCQSQVWIVMRQNAHGIIELQGDSDAAIVKGLIAVVFILYDQMTPQDIVSFDVRPWFEKMALTQHLTPSRSQGLEAMIRAIRAKAAALS</sequence>
<accession>Q3Z232</accession>
<evidence type="ECO:0000255" key="1">
    <source>
        <dbReference type="HAMAP-Rule" id="MF_01832"/>
    </source>
</evidence>
<organism>
    <name type="scientific">Shigella sonnei (strain Ss046)</name>
    <dbReference type="NCBI Taxonomy" id="300269"/>
    <lineage>
        <taxon>Bacteria</taxon>
        <taxon>Pseudomonadati</taxon>
        <taxon>Pseudomonadota</taxon>
        <taxon>Gammaproteobacteria</taxon>
        <taxon>Enterobacterales</taxon>
        <taxon>Enterobacteriaceae</taxon>
        <taxon>Shigella</taxon>
    </lineage>
</organism>
<gene>
    <name evidence="1" type="primary">sufE</name>
    <name type="ordered locus">SSON_1477</name>
</gene>
<proteinExistence type="inferred from homology"/>
<protein>
    <recommendedName>
        <fullName evidence="1">Cysteine desulfuration protein SufE</fullName>
    </recommendedName>
</protein>
<feature type="chain" id="PRO_1000070449" description="Cysteine desulfuration protein SufE">
    <location>
        <begin position="1"/>
        <end position="138"/>
    </location>
</feature>
<feature type="active site" description="Cysteine persulfide intermediate" evidence="1">
    <location>
        <position position="51"/>
    </location>
</feature>